<evidence type="ECO:0000255" key="1">
    <source>
        <dbReference type="HAMAP-Rule" id="MF_01121"/>
    </source>
</evidence>
<evidence type="ECO:0000255" key="2">
    <source>
        <dbReference type="PROSITE-ProRule" id="PRU00236"/>
    </source>
</evidence>
<evidence type="ECO:0000269" key="3">
    <source>
    </source>
</evidence>
<evidence type="ECO:0000303" key="4">
    <source>
    </source>
</evidence>
<sequence>MNFPYRNIVVLTGAGISAESGIQTFRAQDGLWENHRIEDVATPEGFARDPDLVQSFYNQRRQKLQDETIKPNAAHLALGRLEAELEGKVTVITQNIDNLHERGGSQNVIHMHGELLKARCSESNQVIEHTEDIKTGELCHCCQIPSQMRPHIVWFGEMRLRMGEIYAALEEADLFVSIGTSGVVYPAAGFVHDAKMHGAHTIEINLEPSAVESEFEEKRYGKASVEVPKLVDEILALDTKA</sequence>
<reference key="1">
    <citation type="journal article" date="2003" name="Lancet">
        <title>Genome sequence of Vibrio parahaemolyticus: a pathogenic mechanism distinct from that of V. cholerae.</title>
        <authorList>
            <person name="Makino K."/>
            <person name="Oshima K."/>
            <person name="Kurokawa K."/>
            <person name="Yokoyama K."/>
            <person name="Uda T."/>
            <person name="Tagomori K."/>
            <person name="Iijima Y."/>
            <person name="Najima M."/>
            <person name="Nakano M."/>
            <person name="Yamashita A."/>
            <person name="Kubota Y."/>
            <person name="Kimura S."/>
            <person name="Yasunaga T."/>
            <person name="Honda T."/>
            <person name="Shinagawa H."/>
            <person name="Hattori M."/>
            <person name="Iida T."/>
        </authorList>
    </citation>
    <scope>NUCLEOTIDE SEQUENCE [LARGE SCALE GENOMIC DNA]</scope>
    <source>
        <strain>RIMD 2210633</strain>
    </source>
</reference>
<reference key="2">
    <citation type="journal article" date="2022" name="J. Biochem.">
        <title>vp1524, a Vibrio parahaemolyticus NAD +-dependent deacetylase, regulates host response during infection by induction of host histone deacetylation.</title>
        <authorList>
            <person name="Mishra P."/>
            <person name="Beura S."/>
            <person name="Sikder S."/>
            <person name="Dhal A.K."/>
            <person name="Vasudevan M."/>
            <person name="Roy M."/>
            <person name="Rakshit J."/>
            <person name="Budhwar R."/>
            <person name="Kundu T.K."/>
            <person name="Modak R."/>
        </authorList>
    </citation>
    <scope>FUNCTION</scope>
    <scope>CATALYTIC ACTIVITY</scope>
    <scope>SUBCELLULAR LOCATION</scope>
    <scope>INDUCTION</scope>
    <scope>SUBUNIT</scope>
    <scope>3D-STRUCTURE MODELING</scope>
    <scope>DELETION MUTANTS</scope>
    <source>
        <strain>RIMD 2210633</strain>
    </source>
</reference>
<protein>
    <recommendedName>
        <fullName evidence="1">NAD-dependent protein deacylase</fullName>
        <ecNumber evidence="1 3">2.3.1.286</ecNumber>
    </recommendedName>
    <alternativeName>
        <fullName evidence="4">Histone lysine deacetylase</fullName>
        <shortName evidence="4">Histone KDAC</shortName>
    </alternativeName>
    <alternativeName>
        <fullName evidence="4">NAD(+)-dependent deacetylase</fullName>
    </alternativeName>
    <alternativeName>
        <fullName evidence="1">Regulatory protein SIR2 homolog</fullName>
    </alternativeName>
</protein>
<gene>
    <name evidence="1 4" type="primary">cobB</name>
    <name type="ordered locus">VP1524</name>
</gene>
<name>NPD_VIBPA</name>
<keyword id="KW-0963">Cytoplasm</keyword>
<keyword id="KW-1035">Host cytoplasm</keyword>
<keyword id="KW-1048">Host nucleus</keyword>
<keyword id="KW-0479">Metal-binding</keyword>
<keyword id="KW-0520">NAD</keyword>
<keyword id="KW-0808">Transferase</keyword>
<keyword id="KW-0862">Zinc</keyword>
<accession>Q87PH8</accession>
<organism>
    <name type="scientific">Vibrio parahaemolyticus serotype O3:K6 (strain RIMD 2210633)</name>
    <dbReference type="NCBI Taxonomy" id="223926"/>
    <lineage>
        <taxon>Bacteria</taxon>
        <taxon>Pseudomonadati</taxon>
        <taxon>Pseudomonadota</taxon>
        <taxon>Gammaproteobacteria</taxon>
        <taxon>Vibrionales</taxon>
        <taxon>Vibrionaceae</taxon>
        <taxon>Vibrio</taxon>
    </lineage>
</organism>
<dbReference type="EC" id="2.3.1.286" evidence="1 3"/>
<dbReference type="EMBL" id="BA000031">
    <property type="protein sequence ID" value="BAC59787.1"/>
    <property type="molecule type" value="Genomic_DNA"/>
</dbReference>
<dbReference type="RefSeq" id="NP_797903.1">
    <property type="nucleotide sequence ID" value="NC_004603.1"/>
</dbReference>
<dbReference type="RefSeq" id="WP_011105862.1">
    <property type="nucleotide sequence ID" value="NC_004603.1"/>
</dbReference>
<dbReference type="SMR" id="Q87PH8"/>
<dbReference type="GeneID" id="1189031"/>
<dbReference type="KEGG" id="vpa:VP1524"/>
<dbReference type="PATRIC" id="fig|223926.6.peg.1455"/>
<dbReference type="eggNOG" id="COG0846">
    <property type="taxonomic scope" value="Bacteria"/>
</dbReference>
<dbReference type="HOGENOM" id="CLU_023643_3_1_6"/>
<dbReference type="Proteomes" id="UP000002493">
    <property type="component" value="Chromosome 1"/>
</dbReference>
<dbReference type="GO" id="GO:0005737">
    <property type="term" value="C:cytoplasm"/>
    <property type="evidence" value="ECO:0007669"/>
    <property type="project" value="UniProtKB-SubCell"/>
</dbReference>
<dbReference type="GO" id="GO:0044164">
    <property type="term" value="C:host cell cytosol"/>
    <property type="evidence" value="ECO:0007669"/>
    <property type="project" value="UniProtKB-SubCell"/>
</dbReference>
<dbReference type="GO" id="GO:0042025">
    <property type="term" value="C:host cell nucleus"/>
    <property type="evidence" value="ECO:0007669"/>
    <property type="project" value="UniProtKB-SubCell"/>
</dbReference>
<dbReference type="GO" id="GO:0017136">
    <property type="term" value="F:histone deacetylase activity, NAD-dependent"/>
    <property type="evidence" value="ECO:0007669"/>
    <property type="project" value="TreeGrafter"/>
</dbReference>
<dbReference type="GO" id="GO:0070403">
    <property type="term" value="F:NAD+ binding"/>
    <property type="evidence" value="ECO:0007669"/>
    <property type="project" value="UniProtKB-UniRule"/>
</dbReference>
<dbReference type="GO" id="GO:0036054">
    <property type="term" value="F:protein-malonyllysine demalonylase activity"/>
    <property type="evidence" value="ECO:0007669"/>
    <property type="project" value="InterPro"/>
</dbReference>
<dbReference type="GO" id="GO:0036055">
    <property type="term" value="F:protein-succinyllysine desuccinylase activity"/>
    <property type="evidence" value="ECO:0007669"/>
    <property type="project" value="UniProtKB-UniRule"/>
</dbReference>
<dbReference type="GO" id="GO:0008270">
    <property type="term" value="F:zinc ion binding"/>
    <property type="evidence" value="ECO:0007669"/>
    <property type="project" value="UniProtKB-UniRule"/>
</dbReference>
<dbReference type="CDD" id="cd01412">
    <property type="entry name" value="SIRT5_Af1_CobB"/>
    <property type="match status" value="1"/>
</dbReference>
<dbReference type="Gene3D" id="3.30.1600.10">
    <property type="entry name" value="SIR2/SIRT2 'Small Domain"/>
    <property type="match status" value="1"/>
</dbReference>
<dbReference type="Gene3D" id="3.40.50.1220">
    <property type="entry name" value="TPP-binding domain"/>
    <property type="match status" value="1"/>
</dbReference>
<dbReference type="HAMAP" id="MF_01121">
    <property type="entry name" value="Sirtuin_ClassIII"/>
    <property type="match status" value="1"/>
</dbReference>
<dbReference type="InterPro" id="IPR029035">
    <property type="entry name" value="DHS-like_NAD/FAD-binding_dom"/>
</dbReference>
<dbReference type="InterPro" id="IPR050134">
    <property type="entry name" value="NAD-dep_sirtuin_deacylases"/>
</dbReference>
<dbReference type="InterPro" id="IPR003000">
    <property type="entry name" value="Sirtuin"/>
</dbReference>
<dbReference type="InterPro" id="IPR026591">
    <property type="entry name" value="Sirtuin_cat_small_dom_sf"/>
</dbReference>
<dbReference type="InterPro" id="IPR027546">
    <property type="entry name" value="Sirtuin_class_III"/>
</dbReference>
<dbReference type="InterPro" id="IPR026590">
    <property type="entry name" value="Ssirtuin_cat_dom"/>
</dbReference>
<dbReference type="NCBIfam" id="NF001755">
    <property type="entry name" value="PRK00481.1-5"/>
    <property type="match status" value="1"/>
</dbReference>
<dbReference type="PANTHER" id="PTHR11085:SF4">
    <property type="entry name" value="NAD-DEPENDENT PROTEIN DEACYLASE"/>
    <property type="match status" value="1"/>
</dbReference>
<dbReference type="PANTHER" id="PTHR11085">
    <property type="entry name" value="NAD-DEPENDENT PROTEIN DEACYLASE SIRTUIN-5, MITOCHONDRIAL-RELATED"/>
    <property type="match status" value="1"/>
</dbReference>
<dbReference type="Pfam" id="PF02146">
    <property type="entry name" value="SIR2"/>
    <property type="match status" value="1"/>
</dbReference>
<dbReference type="SUPFAM" id="SSF52467">
    <property type="entry name" value="DHS-like NAD/FAD-binding domain"/>
    <property type="match status" value="1"/>
</dbReference>
<dbReference type="PROSITE" id="PS50305">
    <property type="entry name" value="SIRTUIN"/>
    <property type="match status" value="1"/>
</dbReference>
<comment type="function">
    <text evidence="1 3">NAD-dependent lysine deacetylase and desuccinylase that specifically removes acetyl and succinyl groups on target proteins. Modulates the activities of several proteins which are inactive in their acylated form (By similarity). In the intracellular pathogen V.parahaemolyticus, this enzyme regulates host response during infection by induction of host histone deacetylation; it specifically causes deacetylation of histone lysine residues H3K56, H3K9, H3K18 and H4K16 which results in transcriptional repression of several host genes involved in epigenetic regulation, immune response, and autophagy (PubMed:35325168).</text>
</comment>
<comment type="catalytic activity">
    <reaction evidence="1 3">
        <text>N(6)-acetyl-L-lysyl-[protein] + NAD(+) + H2O = 2''-O-acetyl-ADP-D-ribose + nicotinamide + L-lysyl-[protein]</text>
        <dbReference type="Rhea" id="RHEA:43636"/>
        <dbReference type="Rhea" id="RHEA-COMP:9752"/>
        <dbReference type="Rhea" id="RHEA-COMP:10731"/>
        <dbReference type="ChEBI" id="CHEBI:15377"/>
        <dbReference type="ChEBI" id="CHEBI:17154"/>
        <dbReference type="ChEBI" id="CHEBI:29969"/>
        <dbReference type="ChEBI" id="CHEBI:57540"/>
        <dbReference type="ChEBI" id="CHEBI:61930"/>
        <dbReference type="ChEBI" id="CHEBI:83767"/>
        <dbReference type="EC" id="2.3.1.286"/>
    </reaction>
    <physiologicalReaction direction="left-to-right" evidence="3">
        <dbReference type="Rhea" id="RHEA:43637"/>
    </physiologicalReaction>
</comment>
<comment type="catalytic activity">
    <reaction evidence="1">
        <text>N(6)-succinyl-L-lysyl-[protein] + NAD(+) + H2O = 2''-O-succinyl-ADP-D-ribose + nicotinamide + L-lysyl-[protein]</text>
        <dbReference type="Rhea" id="RHEA:47668"/>
        <dbReference type="Rhea" id="RHEA-COMP:9752"/>
        <dbReference type="Rhea" id="RHEA-COMP:11877"/>
        <dbReference type="ChEBI" id="CHEBI:15377"/>
        <dbReference type="ChEBI" id="CHEBI:17154"/>
        <dbReference type="ChEBI" id="CHEBI:29969"/>
        <dbReference type="ChEBI" id="CHEBI:57540"/>
        <dbReference type="ChEBI" id="CHEBI:87830"/>
        <dbReference type="ChEBI" id="CHEBI:87832"/>
    </reaction>
</comment>
<comment type="cofactor">
    <cofactor evidence="1">
        <name>Zn(2+)</name>
        <dbReference type="ChEBI" id="CHEBI:29105"/>
    </cofactor>
    <text evidence="1">Binds 1 zinc ion per subunit.</text>
</comment>
<comment type="subunit">
    <text evidence="3">Monomer.</text>
</comment>
<comment type="subcellular location">
    <subcellularLocation>
        <location evidence="1">Cytoplasm</location>
    </subcellularLocation>
    <subcellularLocation>
        <location evidence="3">Host cytoplasm</location>
        <location evidence="3">Host cytosol</location>
    </subcellularLocation>
    <subcellularLocation>
        <location evidence="3">Host nucleus</location>
    </subcellularLocation>
    <text evidence="3">Is translocated into host cells during V.parahaemolyticus infection and localizes to the nuclear periphery of the host cells.</text>
</comment>
<comment type="induction">
    <text evidence="3">Is overexpressed during infection.</text>
</comment>
<comment type="domain">
    <text evidence="1 3">The NAD(+) binding region 13-32 is crucial for deacetylase activity (PubMed:35325168). 2 residues (Tyr-57 and Arg-60) present in a large hydrophobic pocket are probably involved in substrate specificity. They are important for desuccinylation activity, but dispensable for deacetylation activity (By similarity).</text>
</comment>
<comment type="similarity">
    <text evidence="1">Belongs to the sirtuin family. Class III subfamily.</text>
</comment>
<feature type="chain" id="PRO_0000110369" description="NAD-dependent protein deacylase">
    <location>
        <begin position="1"/>
        <end position="241"/>
    </location>
</feature>
<feature type="domain" description="Deacetylase sirtuin-type" evidence="2">
    <location>
        <begin position="1"/>
        <end position="237"/>
    </location>
</feature>
<feature type="active site" description="Proton acceptor" evidence="1">
    <location>
        <position position="112"/>
    </location>
</feature>
<feature type="binding site" evidence="1">
    <location>
        <begin position="13"/>
        <end position="32"/>
    </location>
    <ligand>
        <name>NAD(+)</name>
        <dbReference type="ChEBI" id="CHEBI:57540"/>
    </ligand>
</feature>
<feature type="binding site" evidence="1">
    <location>
        <position position="57"/>
    </location>
    <ligand>
        <name>substrate</name>
    </ligand>
</feature>
<feature type="binding site" evidence="1">
    <location>
        <position position="60"/>
    </location>
    <ligand>
        <name>substrate</name>
    </ligand>
</feature>
<feature type="binding site" evidence="1">
    <location>
        <begin position="94"/>
        <end position="97"/>
    </location>
    <ligand>
        <name>NAD(+)</name>
        <dbReference type="ChEBI" id="CHEBI:57540"/>
    </ligand>
</feature>
<feature type="binding site" evidence="1">
    <location>
        <position position="120"/>
    </location>
    <ligand>
        <name>Zn(2+)</name>
        <dbReference type="ChEBI" id="CHEBI:29105"/>
    </ligand>
</feature>
<feature type="binding site" evidence="1">
    <location>
        <position position="139"/>
    </location>
    <ligand>
        <name>Zn(2+)</name>
        <dbReference type="ChEBI" id="CHEBI:29105"/>
    </ligand>
</feature>
<feature type="binding site" evidence="1">
    <location>
        <begin position="179"/>
        <end position="181"/>
    </location>
    <ligand>
        <name>NAD(+)</name>
        <dbReference type="ChEBI" id="CHEBI:57540"/>
    </ligand>
</feature>
<feature type="binding site" evidence="1">
    <location>
        <begin position="205"/>
        <end position="207"/>
    </location>
    <ligand>
        <name>NAD(+)</name>
        <dbReference type="ChEBI" id="CHEBI:57540"/>
    </ligand>
</feature>
<feature type="binding site" evidence="1">
    <location>
        <position position="223"/>
    </location>
    <ligand>
        <name>NAD(+)</name>
        <dbReference type="ChEBI" id="CHEBI:57540"/>
    </ligand>
</feature>
<proteinExistence type="evidence at protein level"/>